<organism>
    <name type="scientific">Malacoplasma penetrans (strain HF-2)</name>
    <name type="common">Mycoplasma penetrans</name>
    <dbReference type="NCBI Taxonomy" id="272633"/>
    <lineage>
        <taxon>Bacteria</taxon>
        <taxon>Bacillati</taxon>
        <taxon>Mycoplasmatota</taxon>
        <taxon>Mycoplasmoidales</taxon>
        <taxon>Mycoplasmoidaceae</taxon>
        <taxon>Malacoplasma</taxon>
    </lineage>
</organism>
<proteinExistence type="inferred from homology"/>
<accession>Q8EUJ8</accession>
<keyword id="KW-0030">Aminoacyl-tRNA synthetase</keyword>
<keyword id="KW-0067">ATP-binding</keyword>
<keyword id="KW-0963">Cytoplasm</keyword>
<keyword id="KW-0436">Ligase</keyword>
<keyword id="KW-0460">Magnesium</keyword>
<keyword id="KW-0479">Metal-binding</keyword>
<keyword id="KW-0547">Nucleotide-binding</keyword>
<keyword id="KW-0648">Protein biosynthesis</keyword>
<keyword id="KW-1185">Reference proteome</keyword>
<feature type="chain" id="PRO_0000126730" description="Phenylalanine--tRNA ligase alpha subunit">
    <location>
        <begin position="1"/>
        <end position="341"/>
    </location>
</feature>
<feature type="binding site" evidence="1">
    <location>
        <position position="252"/>
    </location>
    <ligand>
        <name>Mg(2+)</name>
        <dbReference type="ChEBI" id="CHEBI:18420"/>
        <note>shared with beta subunit</note>
    </ligand>
</feature>
<evidence type="ECO:0000255" key="1">
    <source>
        <dbReference type="HAMAP-Rule" id="MF_00281"/>
    </source>
</evidence>
<protein>
    <recommendedName>
        <fullName evidence="1">Phenylalanine--tRNA ligase alpha subunit</fullName>
        <ecNumber evidence="1">6.1.1.20</ecNumber>
    </recommendedName>
    <alternativeName>
        <fullName evidence="1">Phenylalanyl-tRNA synthetase alpha subunit</fullName>
        <shortName evidence="1">PheRS</shortName>
    </alternativeName>
</protein>
<dbReference type="EC" id="6.1.1.20" evidence="1"/>
<dbReference type="EMBL" id="BA000026">
    <property type="protein sequence ID" value="BAC44714.1"/>
    <property type="molecule type" value="Genomic_DNA"/>
</dbReference>
<dbReference type="RefSeq" id="WP_011077743.1">
    <property type="nucleotide sequence ID" value="NC_004432.1"/>
</dbReference>
<dbReference type="SMR" id="Q8EUJ8"/>
<dbReference type="FunCoup" id="Q8EUJ8">
    <property type="interactions" value="239"/>
</dbReference>
<dbReference type="STRING" id="272633.gene:10732048"/>
<dbReference type="KEGG" id="mpe:MYPE9270"/>
<dbReference type="eggNOG" id="COG0016">
    <property type="taxonomic scope" value="Bacteria"/>
</dbReference>
<dbReference type="HOGENOM" id="CLU_025086_0_1_14"/>
<dbReference type="InParanoid" id="Q8EUJ8"/>
<dbReference type="Proteomes" id="UP000002522">
    <property type="component" value="Chromosome"/>
</dbReference>
<dbReference type="GO" id="GO:0005737">
    <property type="term" value="C:cytoplasm"/>
    <property type="evidence" value="ECO:0007669"/>
    <property type="project" value="UniProtKB-SubCell"/>
</dbReference>
<dbReference type="GO" id="GO:0005524">
    <property type="term" value="F:ATP binding"/>
    <property type="evidence" value="ECO:0007669"/>
    <property type="project" value="UniProtKB-UniRule"/>
</dbReference>
<dbReference type="GO" id="GO:0000287">
    <property type="term" value="F:magnesium ion binding"/>
    <property type="evidence" value="ECO:0007669"/>
    <property type="project" value="UniProtKB-UniRule"/>
</dbReference>
<dbReference type="GO" id="GO:0004826">
    <property type="term" value="F:phenylalanine-tRNA ligase activity"/>
    <property type="evidence" value="ECO:0007669"/>
    <property type="project" value="UniProtKB-UniRule"/>
</dbReference>
<dbReference type="GO" id="GO:0000049">
    <property type="term" value="F:tRNA binding"/>
    <property type="evidence" value="ECO:0007669"/>
    <property type="project" value="InterPro"/>
</dbReference>
<dbReference type="GO" id="GO:0006432">
    <property type="term" value="P:phenylalanyl-tRNA aminoacylation"/>
    <property type="evidence" value="ECO:0007669"/>
    <property type="project" value="UniProtKB-UniRule"/>
</dbReference>
<dbReference type="CDD" id="cd00496">
    <property type="entry name" value="PheRS_alpha_core"/>
    <property type="match status" value="1"/>
</dbReference>
<dbReference type="Gene3D" id="3.30.930.10">
    <property type="entry name" value="Bira Bifunctional Protein, Domain 2"/>
    <property type="match status" value="1"/>
</dbReference>
<dbReference type="HAMAP" id="MF_00281">
    <property type="entry name" value="Phe_tRNA_synth_alpha1"/>
    <property type="match status" value="1"/>
</dbReference>
<dbReference type="InterPro" id="IPR006195">
    <property type="entry name" value="aa-tRNA-synth_II"/>
</dbReference>
<dbReference type="InterPro" id="IPR045864">
    <property type="entry name" value="aa-tRNA-synth_II/BPL/LPL"/>
</dbReference>
<dbReference type="InterPro" id="IPR004529">
    <property type="entry name" value="Phe-tRNA-synth_IIc_asu"/>
</dbReference>
<dbReference type="InterPro" id="IPR004188">
    <property type="entry name" value="Phe-tRNA_ligase_II_N"/>
</dbReference>
<dbReference type="InterPro" id="IPR022911">
    <property type="entry name" value="Phe_tRNA_ligase_alpha1_bac"/>
</dbReference>
<dbReference type="InterPro" id="IPR002319">
    <property type="entry name" value="Phenylalanyl-tRNA_Synthase"/>
</dbReference>
<dbReference type="InterPro" id="IPR010978">
    <property type="entry name" value="tRNA-bd_arm"/>
</dbReference>
<dbReference type="NCBIfam" id="TIGR00468">
    <property type="entry name" value="pheS"/>
    <property type="match status" value="1"/>
</dbReference>
<dbReference type="PANTHER" id="PTHR11538:SF41">
    <property type="entry name" value="PHENYLALANINE--TRNA LIGASE, MITOCHONDRIAL"/>
    <property type="match status" value="1"/>
</dbReference>
<dbReference type="PANTHER" id="PTHR11538">
    <property type="entry name" value="PHENYLALANYL-TRNA SYNTHETASE"/>
    <property type="match status" value="1"/>
</dbReference>
<dbReference type="Pfam" id="PF02912">
    <property type="entry name" value="Phe_tRNA-synt_N"/>
    <property type="match status" value="1"/>
</dbReference>
<dbReference type="Pfam" id="PF01409">
    <property type="entry name" value="tRNA-synt_2d"/>
    <property type="match status" value="1"/>
</dbReference>
<dbReference type="SUPFAM" id="SSF55681">
    <property type="entry name" value="Class II aaRS and biotin synthetases"/>
    <property type="match status" value="1"/>
</dbReference>
<dbReference type="SUPFAM" id="SSF46589">
    <property type="entry name" value="tRNA-binding arm"/>
    <property type="match status" value="1"/>
</dbReference>
<dbReference type="PROSITE" id="PS50862">
    <property type="entry name" value="AA_TRNA_LIGASE_II"/>
    <property type="match status" value="1"/>
</dbReference>
<comment type="catalytic activity">
    <reaction evidence="1">
        <text>tRNA(Phe) + L-phenylalanine + ATP = L-phenylalanyl-tRNA(Phe) + AMP + diphosphate + H(+)</text>
        <dbReference type="Rhea" id="RHEA:19413"/>
        <dbReference type="Rhea" id="RHEA-COMP:9668"/>
        <dbReference type="Rhea" id="RHEA-COMP:9699"/>
        <dbReference type="ChEBI" id="CHEBI:15378"/>
        <dbReference type="ChEBI" id="CHEBI:30616"/>
        <dbReference type="ChEBI" id="CHEBI:33019"/>
        <dbReference type="ChEBI" id="CHEBI:58095"/>
        <dbReference type="ChEBI" id="CHEBI:78442"/>
        <dbReference type="ChEBI" id="CHEBI:78531"/>
        <dbReference type="ChEBI" id="CHEBI:456215"/>
        <dbReference type="EC" id="6.1.1.20"/>
    </reaction>
</comment>
<comment type="cofactor">
    <cofactor evidence="1">
        <name>Mg(2+)</name>
        <dbReference type="ChEBI" id="CHEBI:18420"/>
    </cofactor>
    <text evidence="1">Binds 2 magnesium ions per tetramer.</text>
</comment>
<comment type="subunit">
    <text evidence="1">Tetramer of two alpha and two beta subunits.</text>
</comment>
<comment type="subcellular location">
    <subcellularLocation>
        <location evidence="1">Cytoplasm</location>
    </subcellularLocation>
</comment>
<comment type="similarity">
    <text evidence="1">Belongs to the class-II aminoacyl-tRNA synthetase family. Phe-tRNA synthetase alpha subunit type 1 subfamily.</text>
</comment>
<sequence length="341" mass="39994">MTKIDFENIKILQDKIKDIEIEKNVYDERNIFLKNYLSPLYKELKEMSEEDKKEFGKQLNQYKEMIEDVAEKRINEIKKQKILNIKSEYDINLPADYFQSGGINPIDLVKNEIVKFFKKANFKILTESEVTSVEFNFDSLNIKKDHPARSISDTFYIDDKQLLRVHNTAITSKALRMFNKEEEIKVLSHGNVYRKDDDDATHSHQFNQIDMVWVKKGMSLANLKWLTDKLLKYLFNESIKIRYRISHFPFTEPSFEVDINCFFCDSKDHCSVCKNTKWIEVLGAGLLHPNVLKNANVKKGLSGIAFGIGIDRIAMLKYQIKDIRRLYGNDFSLIESFKGER</sequence>
<reference key="1">
    <citation type="journal article" date="2002" name="Nucleic Acids Res.">
        <title>The complete genomic sequence of Mycoplasma penetrans, an intracellular bacterial pathogen in humans.</title>
        <authorList>
            <person name="Sasaki Y."/>
            <person name="Ishikawa J."/>
            <person name="Yamashita A."/>
            <person name="Oshima K."/>
            <person name="Kenri T."/>
            <person name="Furuya K."/>
            <person name="Yoshino C."/>
            <person name="Horino A."/>
            <person name="Shiba T."/>
            <person name="Sasaki T."/>
            <person name="Hattori M."/>
        </authorList>
    </citation>
    <scope>NUCLEOTIDE SEQUENCE [LARGE SCALE GENOMIC DNA]</scope>
    <source>
        <strain>HF-2</strain>
    </source>
</reference>
<name>SYFA_MALP2</name>
<gene>
    <name evidence="1" type="primary">pheS</name>
    <name type="ordered locus">MYPE9270</name>
</gene>